<dbReference type="EC" id="1.6.5.2" evidence="1"/>
<dbReference type="EMBL" id="CP000886">
    <property type="protein sequence ID" value="ABX69618.1"/>
    <property type="molecule type" value="Genomic_DNA"/>
</dbReference>
<dbReference type="RefSeq" id="WP_001136066.1">
    <property type="nucleotide sequence ID" value="NC_010102.1"/>
</dbReference>
<dbReference type="SMR" id="A9MT18"/>
<dbReference type="KEGG" id="spq:SPAB_04301"/>
<dbReference type="PATRIC" id="fig|1016998.12.peg.4047"/>
<dbReference type="HOGENOM" id="CLU_058643_0_1_6"/>
<dbReference type="BioCyc" id="SENT1016998:SPAB_RS17525-MONOMER"/>
<dbReference type="Proteomes" id="UP000008556">
    <property type="component" value="Chromosome"/>
</dbReference>
<dbReference type="GO" id="GO:0005886">
    <property type="term" value="C:plasma membrane"/>
    <property type="evidence" value="ECO:0007669"/>
    <property type="project" value="UniProtKB-SubCell"/>
</dbReference>
<dbReference type="GO" id="GO:0009055">
    <property type="term" value="F:electron transfer activity"/>
    <property type="evidence" value="ECO:0007669"/>
    <property type="project" value="TreeGrafter"/>
</dbReference>
<dbReference type="GO" id="GO:0010181">
    <property type="term" value="F:FMN binding"/>
    <property type="evidence" value="ECO:0007669"/>
    <property type="project" value="TreeGrafter"/>
</dbReference>
<dbReference type="GO" id="GO:0050136">
    <property type="term" value="F:NADH:ubiquinone reductase (non-electrogenic) activity"/>
    <property type="evidence" value="ECO:0007669"/>
    <property type="project" value="RHEA"/>
</dbReference>
<dbReference type="GO" id="GO:0008753">
    <property type="term" value="F:NADPH dehydrogenase (quinone) activity"/>
    <property type="evidence" value="ECO:0007669"/>
    <property type="project" value="RHEA"/>
</dbReference>
<dbReference type="GO" id="GO:1901381">
    <property type="term" value="P:positive regulation of potassium ion transmembrane transport"/>
    <property type="evidence" value="ECO:0007669"/>
    <property type="project" value="UniProtKB-UniRule"/>
</dbReference>
<dbReference type="GO" id="GO:0006813">
    <property type="term" value="P:potassium ion transport"/>
    <property type="evidence" value="ECO:0007669"/>
    <property type="project" value="InterPro"/>
</dbReference>
<dbReference type="FunFam" id="3.40.50.360:FF:000013">
    <property type="entry name" value="Glutathione-regulated potassium-efflux system ancillary protein KefG"/>
    <property type="match status" value="1"/>
</dbReference>
<dbReference type="Gene3D" id="3.40.50.360">
    <property type="match status" value="1"/>
</dbReference>
<dbReference type="HAMAP" id="MF_01415">
    <property type="entry name" value="K_H_efflux_KefG"/>
    <property type="match status" value="1"/>
</dbReference>
<dbReference type="InterPro" id="IPR003680">
    <property type="entry name" value="Flavodoxin_fold"/>
</dbReference>
<dbReference type="InterPro" id="IPR029039">
    <property type="entry name" value="Flavoprotein-like_sf"/>
</dbReference>
<dbReference type="InterPro" id="IPR023947">
    <property type="entry name" value="K_H_efflux_KefG"/>
</dbReference>
<dbReference type="InterPro" id="IPR046980">
    <property type="entry name" value="KefG/KefF"/>
</dbReference>
<dbReference type="NCBIfam" id="NF003430">
    <property type="entry name" value="PRK04930.1"/>
    <property type="match status" value="1"/>
</dbReference>
<dbReference type="PANTHER" id="PTHR47307">
    <property type="entry name" value="GLUTATHIONE-REGULATED POTASSIUM-EFFLUX SYSTEM ANCILLARY PROTEIN KEFG"/>
    <property type="match status" value="1"/>
</dbReference>
<dbReference type="PANTHER" id="PTHR47307:SF1">
    <property type="entry name" value="GLUTATHIONE-REGULATED POTASSIUM-EFFLUX SYSTEM ANCILLARY PROTEIN KEFG"/>
    <property type="match status" value="1"/>
</dbReference>
<dbReference type="Pfam" id="PF02525">
    <property type="entry name" value="Flavodoxin_2"/>
    <property type="match status" value="1"/>
</dbReference>
<dbReference type="SUPFAM" id="SSF52218">
    <property type="entry name" value="Flavoproteins"/>
    <property type="match status" value="1"/>
</dbReference>
<organism>
    <name type="scientific">Salmonella paratyphi B (strain ATCC BAA-1250 / SPB7)</name>
    <dbReference type="NCBI Taxonomy" id="1016998"/>
    <lineage>
        <taxon>Bacteria</taxon>
        <taxon>Pseudomonadati</taxon>
        <taxon>Pseudomonadota</taxon>
        <taxon>Gammaproteobacteria</taxon>
        <taxon>Enterobacterales</taxon>
        <taxon>Enterobacteriaceae</taxon>
        <taxon>Salmonella</taxon>
    </lineage>
</organism>
<proteinExistence type="inferred from homology"/>
<reference key="1">
    <citation type="submission" date="2007-11" db="EMBL/GenBank/DDBJ databases">
        <authorList>
            <consortium name="The Salmonella enterica serovar Paratyphi B Genome Sequencing Project"/>
            <person name="McClelland M."/>
            <person name="Sanderson E.K."/>
            <person name="Porwollik S."/>
            <person name="Spieth J."/>
            <person name="Clifton W.S."/>
            <person name="Fulton R."/>
            <person name="Cordes M."/>
            <person name="Wollam A."/>
            <person name="Shah N."/>
            <person name="Pepin K."/>
            <person name="Bhonagiri V."/>
            <person name="Nash W."/>
            <person name="Johnson M."/>
            <person name="Thiruvilangam P."/>
            <person name="Wilson R."/>
        </authorList>
    </citation>
    <scope>NUCLEOTIDE SEQUENCE [LARGE SCALE GENOMIC DNA]</scope>
    <source>
        <strain>ATCC BAA-1250 / SPB7</strain>
    </source>
</reference>
<feature type="chain" id="PRO_1000087403" description="Glutathione-regulated potassium-efflux system ancillary protein KefG">
    <location>
        <begin position="1"/>
        <end position="183"/>
    </location>
</feature>
<evidence type="ECO:0000255" key="1">
    <source>
        <dbReference type="HAMAP-Rule" id="MF_01415"/>
    </source>
</evidence>
<accession>A9MT18</accession>
<sequence length="183" mass="20937">MPQPAKVLLLYAHPESQDSVANRVLLKPAIQHNNVTVHDLYARYPDFFIDTPYEQALLREHDVIVFQHPLYTYSCPALLKEWLDRVLSRGFASGPGGNQLVGKYWRSVITTGEPESAYRYDALNRYPMSDVLRPFELTAAMCRMHWMPPIIVYWARRQSPQTLASHAKAYGEWLANPVSAGGY</sequence>
<gene>
    <name evidence="1" type="primary">kefG</name>
    <name type="ordered locus">SPAB_04301</name>
</gene>
<protein>
    <recommendedName>
        <fullName evidence="1">Glutathione-regulated potassium-efflux system ancillary protein KefG</fullName>
    </recommendedName>
    <alternativeName>
        <fullName evidence="1">Putative quinone oxidoreductase KefG</fullName>
        <ecNumber evidence="1">1.6.5.2</ecNumber>
    </alternativeName>
</protein>
<keyword id="KW-0997">Cell inner membrane</keyword>
<keyword id="KW-1003">Cell membrane</keyword>
<keyword id="KW-0472">Membrane</keyword>
<keyword id="KW-0520">NAD</keyword>
<keyword id="KW-0560">Oxidoreductase</keyword>
<comment type="function">
    <text evidence="1">Regulatory subunit of a potassium efflux system that confers protection against electrophiles. Required for full activity of KefB.</text>
</comment>
<comment type="catalytic activity">
    <reaction evidence="1">
        <text>a quinone + NADH + H(+) = a quinol + NAD(+)</text>
        <dbReference type="Rhea" id="RHEA:46160"/>
        <dbReference type="ChEBI" id="CHEBI:15378"/>
        <dbReference type="ChEBI" id="CHEBI:24646"/>
        <dbReference type="ChEBI" id="CHEBI:57540"/>
        <dbReference type="ChEBI" id="CHEBI:57945"/>
        <dbReference type="ChEBI" id="CHEBI:132124"/>
        <dbReference type="EC" id="1.6.5.2"/>
    </reaction>
</comment>
<comment type="catalytic activity">
    <reaction evidence="1">
        <text>a quinone + NADPH + H(+) = a quinol + NADP(+)</text>
        <dbReference type="Rhea" id="RHEA:46164"/>
        <dbReference type="ChEBI" id="CHEBI:15378"/>
        <dbReference type="ChEBI" id="CHEBI:24646"/>
        <dbReference type="ChEBI" id="CHEBI:57783"/>
        <dbReference type="ChEBI" id="CHEBI:58349"/>
        <dbReference type="ChEBI" id="CHEBI:132124"/>
        <dbReference type="EC" id="1.6.5.2"/>
    </reaction>
</comment>
<comment type="subunit">
    <text evidence="1">Interacts with KefB.</text>
</comment>
<comment type="subcellular location">
    <subcellularLocation>
        <location evidence="1">Cell inner membrane</location>
        <topology evidence="1">Peripheral membrane protein</topology>
        <orientation evidence="1">Cytoplasmic side</orientation>
    </subcellularLocation>
</comment>
<comment type="similarity">
    <text evidence="1">Belongs to the NAD(P)H dehydrogenase (quinone) family. KefG subfamily.</text>
</comment>
<name>KEFG_SALPB</name>